<organism>
    <name type="scientific">Pyrococcus furiosus (strain ATCC 43587 / DSM 3638 / JCM 8422 / Vc1)</name>
    <dbReference type="NCBI Taxonomy" id="186497"/>
    <lineage>
        <taxon>Archaea</taxon>
        <taxon>Methanobacteriati</taxon>
        <taxon>Methanobacteriota</taxon>
        <taxon>Thermococci</taxon>
        <taxon>Thermococcales</taxon>
        <taxon>Thermococcaceae</taxon>
        <taxon>Pyrococcus</taxon>
    </lineage>
</organism>
<keyword id="KW-1185">Reference proteome</keyword>
<gene>
    <name type="ordered locus">PF1979</name>
</gene>
<protein>
    <recommendedName>
        <fullName evidence="1">Protein PF1979</fullName>
    </recommendedName>
</protein>
<reference key="1">
    <citation type="journal article" date="1999" name="Genetics">
        <title>Divergence of the hyperthermophilic archaea Pyrococcus furiosus and P. horikoshii inferred from complete genomic sequences.</title>
        <authorList>
            <person name="Maeder D.L."/>
            <person name="Weiss R.B."/>
            <person name="Dunn D.M."/>
            <person name="Cherry J.L."/>
            <person name="Gonzalez J.M."/>
            <person name="DiRuggiero J."/>
            <person name="Robb F.T."/>
        </authorList>
    </citation>
    <scope>NUCLEOTIDE SEQUENCE [LARGE SCALE GENOMIC DNA]</scope>
    <source>
        <strain>ATCC 43587 / DSM 3638 / JCM 8422 / Vc1</strain>
    </source>
</reference>
<proteinExistence type="inferred from homology"/>
<accession>Q8TZL1</accession>
<feature type="chain" id="PRO_0000142384" description="Protein PF1979">
    <location>
        <begin position="1"/>
        <end position="210"/>
    </location>
</feature>
<feature type="domain" description="AMMECR1" evidence="1">
    <location>
        <begin position="7"/>
        <end position="201"/>
    </location>
</feature>
<name>Y1979_PYRFU</name>
<sequence>MYRIKDEWGEFLVRLARRAIEEYLRTGREIEPPKDIPPELWEKMGVFVTLNRHNVPPQAALRGCIGFPLPIYPLVKATIKAAIYAAVDDPRFPPVKLEEMNNIVVEVSVLTPPELIEGPPEERPKKIKVGRDGLIVEKGIYTGLLLPQVAVEWGWDEEEFLAETCWKAGLPPDCWLDEDTKVYKFTAEIFEEEYPRGPVKRKPLIPQSQD</sequence>
<evidence type="ECO:0000255" key="1">
    <source>
        <dbReference type="HAMAP-Rule" id="MF_00645"/>
    </source>
</evidence>
<dbReference type="EMBL" id="AE009950">
    <property type="protein sequence ID" value="AAL82103.1"/>
    <property type="molecule type" value="Genomic_DNA"/>
</dbReference>
<dbReference type="RefSeq" id="WP_011013121.1">
    <property type="nucleotide sequence ID" value="NZ_CP023154.1"/>
</dbReference>
<dbReference type="SMR" id="Q8TZL1"/>
<dbReference type="STRING" id="186497.PF1979"/>
<dbReference type="PaxDb" id="186497-PF1979"/>
<dbReference type="KEGG" id="pfu:PF1979"/>
<dbReference type="PATRIC" id="fig|186497.12.peg.2052"/>
<dbReference type="eggNOG" id="arCOG01336">
    <property type="taxonomic scope" value="Archaea"/>
</dbReference>
<dbReference type="HOGENOM" id="CLU_095686_1_1_2"/>
<dbReference type="OrthoDB" id="25187at2157"/>
<dbReference type="PhylomeDB" id="Q8TZL1"/>
<dbReference type="Proteomes" id="UP000001013">
    <property type="component" value="Chromosome"/>
</dbReference>
<dbReference type="Gene3D" id="3.30.700.20">
    <property type="entry name" value="Hypothetical protein ph0010, domain 1"/>
    <property type="match status" value="1"/>
</dbReference>
<dbReference type="Gene3D" id="3.30.1490.150">
    <property type="entry name" value="Hypothetical protein ph0010, domain 2"/>
    <property type="match status" value="1"/>
</dbReference>
<dbReference type="HAMAP" id="MF_00645">
    <property type="entry name" value="AMMECR1"/>
    <property type="match status" value="1"/>
</dbReference>
<dbReference type="InterPro" id="IPR023473">
    <property type="entry name" value="AMMECR1"/>
</dbReference>
<dbReference type="InterPro" id="IPR036071">
    <property type="entry name" value="AMMECR1_dom_sf"/>
</dbReference>
<dbReference type="InterPro" id="IPR002733">
    <property type="entry name" value="AMMECR1_domain"/>
</dbReference>
<dbReference type="InterPro" id="IPR027485">
    <property type="entry name" value="AMMECR1_N"/>
</dbReference>
<dbReference type="InterPro" id="IPR027623">
    <property type="entry name" value="AmmeMemoSam_A"/>
</dbReference>
<dbReference type="InterPro" id="IPR023472">
    <property type="entry name" value="Uncharacterised_MJ0810"/>
</dbReference>
<dbReference type="NCBIfam" id="TIGR04335">
    <property type="entry name" value="AmmeMemoSam_A"/>
    <property type="match status" value="1"/>
</dbReference>
<dbReference type="NCBIfam" id="NF002000">
    <property type="entry name" value="PRK00801.1"/>
    <property type="match status" value="1"/>
</dbReference>
<dbReference type="NCBIfam" id="TIGR00296">
    <property type="entry name" value="TIGR00296 family protein"/>
    <property type="match status" value="1"/>
</dbReference>
<dbReference type="PANTHER" id="PTHR13016:SF0">
    <property type="entry name" value="AMME SYNDROME CANDIDATE GENE 1 PROTEIN"/>
    <property type="match status" value="1"/>
</dbReference>
<dbReference type="PANTHER" id="PTHR13016">
    <property type="entry name" value="AMMECR1 HOMOLOG"/>
    <property type="match status" value="1"/>
</dbReference>
<dbReference type="Pfam" id="PF01871">
    <property type="entry name" value="AMMECR1"/>
    <property type="match status" value="1"/>
</dbReference>
<dbReference type="SUPFAM" id="SSF143447">
    <property type="entry name" value="AMMECR1-like"/>
    <property type="match status" value="1"/>
</dbReference>
<dbReference type="PROSITE" id="PS51112">
    <property type="entry name" value="AMMECR1"/>
    <property type="match status" value="1"/>
</dbReference>